<reference key="1">
    <citation type="submission" date="2009-01" db="EMBL/GenBank/DDBJ databases">
        <title>Complete sequence of Diaphorobacter sp. TPSY.</title>
        <authorList>
            <consortium name="US DOE Joint Genome Institute"/>
            <person name="Lucas S."/>
            <person name="Copeland A."/>
            <person name="Lapidus A."/>
            <person name="Glavina del Rio T."/>
            <person name="Tice H."/>
            <person name="Bruce D."/>
            <person name="Goodwin L."/>
            <person name="Pitluck S."/>
            <person name="Chertkov O."/>
            <person name="Brettin T."/>
            <person name="Detter J.C."/>
            <person name="Han C."/>
            <person name="Larimer F."/>
            <person name="Land M."/>
            <person name="Hauser L."/>
            <person name="Kyrpides N."/>
            <person name="Mikhailova N."/>
            <person name="Coates J.D."/>
        </authorList>
    </citation>
    <scope>NUCLEOTIDE SEQUENCE [LARGE SCALE GENOMIC DNA]</scope>
    <source>
        <strain>TPSY</strain>
    </source>
</reference>
<dbReference type="EC" id="6.3.2.8" evidence="1"/>
<dbReference type="EMBL" id="CP001392">
    <property type="protein sequence ID" value="ACM34412.1"/>
    <property type="molecule type" value="Genomic_DNA"/>
</dbReference>
<dbReference type="RefSeq" id="WP_011806763.1">
    <property type="nucleotide sequence ID" value="NC_011992.1"/>
</dbReference>
<dbReference type="SMR" id="B9MFR1"/>
<dbReference type="KEGG" id="dia:Dtpsy_2979"/>
<dbReference type="eggNOG" id="COG0773">
    <property type="taxonomic scope" value="Bacteria"/>
</dbReference>
<dbReference type="HOGENOM" id="CLU_028104_2_2_4"/>
<dbReference type="UniPathway" id="UPA00219"/>
<dbReference type="Proteomes" id="UP000000450">
    <property type="component" value="Chromosome"/>
</dbReference>
<dbReference type="GO" id="GO:0005737">
    <property type="term" value="C:cytoplasm"/>
    <property type="evidence" value="ECO:0007669"/>
    <property type="project" value="UniProtKB-SubCell"/>
</dbReference>
<dbReference type="GO" id="GO:0005524">
    <property type="term" value="F:ATP binding"/>
    <property type="evidence" value="ECO:0007669"/>
    <property type="project" value="UniProtKB-UniRule"/>
</dbReference>
<dbReference type="GO" id="GO:0008763">
    <property type="term" value="F:UDP-N-acetylmuramate-L-alanine ligase activity"/>
    <property type="evidence" value="ECO:0007669"/>
    <property type="project" value="UniProtKB-UniRule"/>
</dbReference>
<dbReference type="GO" id="GO:0051301">
    <property type="term" value="P:cell division"/>
    <property type="evidence" value="ECO:0007669"/>
    <property type="project" value="UniProtKB-KW"/>
</dbReference>
<dbReference type="GO" id="GO:0071555">
    <property type="term" value="P:cell wall organization"/>
    <property type="evidence" value="ECO:0007669"/>
    <property type="project" value="UniProtKB-KW"/>
</dbReference>
<dbReference type="GO" id="GO:0009252">
    <property type="term" value="P:peptidoglycan biosynthetic process"/>
    <property type="evidence" value="ECO:0007669"/>
    <property type="project" value="UniProtKB-UniRule"/>
</dbReference>
<dbReference type="GO" id="GO:0008360">
    <property type="term" value="P:regulation of cell shape"/>
    <property type="evidence" value="ECO:0007669"/>
    <property type="project" value="UniProtKB-KW"/>
</dbReference>
<dbReference type="FunFam" id="3.40.1190.10:FF:000001">
    <property type="entry name" value="UDP-N-acetylmuramate--L-alanine ligase"/>
    <property type="match status" value="1"/>
</dbReference>
<dbReference type="Gene3D" id="3.90.190.20">
    <property type="entry name" value="Mur ligase, C-terminal domain"/>
    <property type="match status" value="1"/>
</dbReference>
<dbReference type="Gene3D" id="3.40.1190.10">
    <property type="entry name" value="Mur-like, catalytic domain"/>
    <property type="match status" value="1"/>
</dbReference>
<dbReference type="Gene3D" id="3.40.50.720">
    <property type="entry name" value="NAD(P)-binding Rossmann-like Domain"/>
    <property type="match status" value="1"/>
</dbReference>
<dbReference type="HAMAP" id="MF_00046">
    <property type="entry name" value="MurC"/>
    <property type="match status" value="1"/>
</dbReference>
<dbReference type="InterPro" id="IPR036565">
    <property type="entry name" value="Mur-like_cat_sf"/>
</dbReference>
<dbReference type="InterPro" id="IPR004101">
    <property type="entry name" value="Mur_ligase_C"/>
</dbReference>
<dbReference type="InterPro" id="IPR036615">
    <property type="entry name" value="Mur_ligase_C_dom_sf"/>
</dbReference>
<dbReference type="InterPro" id="IPR013221">
    <property type="entry name" value="Mur_ligase_cen"/>
</dbReference>
<dbReference type="InterPro" id="IPR000713">
    <property type="entry name" value="Mur_ligase_N"/>
</dbReference>
<dbReference type="InterPro" id="IPR050061">
    <property type="entry name" value="MurCDEF_pg_biosynth"/>
</dbReference>
<dbReference type="InterPro" id="IPR005758">
    <property type="entry name" value="UDP-N-AcMur_Ala_ligase_MurC"/>
</dbReference>
<dbReference type="NCBIfam" id="TIGR01082">
    <property type="entry name" value="murC"/>
    <property type="match status" value="1"/>
</dbReference>
<dbReference type="PANTHER" id="PTHR43445:SF3">
    <property type="entry name" value="UDP-N-ACETYLMURAMATE--L-ALANINE LIGASE"/>
    <property type="match status" value="1"/>
</dbReference>
<dbReference type="PANTHER" id="PTHR43445">
    <property type="entry name" value="UDP-N-ACETYLMURAMATE--L-ALANINE LIGASE-RELATED"/>
    <property type="match status" value="1"/>
</dbReference>
<dbReference type="Pfam" id="PF01225">
    <property type="entry name" value="Mur_ligase"/>
    <property type="match status" value="1"/>
</dbReference>
<dbReference type="Pfam" id="PF02875">
    <property type="entry name" value="Mur_ligase_C"/>
    <property type="match status" value="1"/>
</dbReference>
<dbReference type="Pfam" id="PF08245">
    <property type="entry name" value="Mur_ligase_M"/>
    <property type="match status" value="1"/>
</dbReference>
<dbReference type="SUPFAM" id="SSF51984">
    <property type="entry name" value="MurCD N-terminal domain"/>
    <property type="match status" value="1"/>
</dbReference>
<dbReference type="SUPFAM" id="SSF53623">
    <property type="entry name" value="MurD-like peptide ligases, catalytic domain"/>
    <property type="match status" value="1"/>
</dbReference>
<dbReference type="SUPFAM" id="SSF53244">
    <property type="entry name" value="MurD-like peptide ligases, peptide-binding domain"/>
    <property type="match status" value="1"/>
</dbReference>
<proteinExistence type="inferred from homology"/>
<keyword id="KW-0067">ATP-binding</keyword>
<keyword id="KW-0131">Cell cycle</keyword>
<keyword id="KW-0132">Cell division</keyword>
<keyword id="KW-0133">Cell shape</keyword>
<keyword id="KW-0961">Cell wall biogenesis/degradation</keyword>
<keyword id="KW-0963">Cytoplasm</keyword>
<keyword id="KW-0436">Ligase</keyword>
<keyword id="KW-0547">Nucleotide-binding</keyword>
<keyword id="KW-0573">Peptidoglycan synthesis</keyword>
<keyword id="KW-1185">Reference proteome</keyword>
<protein>
    <recommendedName>
        <fullName evidence="1">UDP-N-acetylmuramate--L-alanine ligase</fullName>
        <ecNumber evidence="1">6.3.2.8</ecNumber>
    </recommendedName>
    <alternativeName>
        <fullName evidence="1">UDP-N-acetylmuramoyl-L-alanine synthetase</fullName>
    </alternativeName>
</protein>
<gene>
    <name evidence="1" type="primary">murC</name>
    <name type="ordered locus">Dtpsy_2979</name>
</gene>
<organism>
    <name type="scientific">Acidovorax ebreus (strain TPSY)</name>
    <name type="common">Diaphorobacter sp. (strain TPSY)</name>
    <dbReference type="NCBI Taxonomy" id="535289"/>
    <lineage>
        <taxon>Bacteria</taxon>
        <taxon>Pseudomonadati</taxon>
        <taxon>Pseudomonadota</taxon>
        <taxon>Betaproteobacteria</taxon>
        <taxon>Burkholderiales</taxon>
        <taxon>Comamonadaceae</taxon>
        <taxon>Diaphorobacter</taxon>
    </lineage>
</organism>
<feature type="chain" id="PRO_1000117408" description="UDP-N-acetylmuramate--L-alanine ligase">
    <location>
        <begin position="1"/>
        <end position="477"/>
    </location>
</feature>
<feature type="binding site" evidence="1">
    <location>
        <begin position="112"/>
        <end position="118"/>
    </location>
    <ligand>
        <name>ATP</name>
        <dbReference type="ChEBI" id="CHEBI:30616"/>
    </ligand>
</feature>
<name>MURC_ACIET</name>
<evidence type="ECO:0000255" key="1">
    <source>
        <dbReference type="HAMAP-Rule" id="MF_00046"/>
    </source>
</evidence>
<accession>B9MFR1</accession>
<sequence length="477" mass="50331">MKQAIRHIHFVGIGGSGMCGIAEVLHNLGYVVSGSDLADSPTLRRLQSLGVATHVGHAAAHIAGADAVVTSTAVQADNPEVLAARERKIPVVPRALMLTELMRLRKGIAIAGAHGKTTTTSLVASVLGEAGLDPTFVIGGRLNSAGTNAKLGQGEYIVVEADESDGSFLNLLPVMAVVTNIDADHMETYGHDFGRLKQAFVDFLHRMPFYGTAILCIDNPAVRDILPLVTCPVTSYGLSEDAEVRAVDVRAVGTQMHFTVQRRNGVTLPDLQVVLNLAGEHNVLNALAVIAVAAELNVPDDALLRALAGFTGVGRRFQRHGDLPAQGGGHFTLIEDYGHHPVEMAATLAAARGAYPGRRLVLAFQPHRYSRTRDCFEDFVKVLGTADAVLLTEVYAAGEAPIVAADGRSLARALRVAGTVEPVFIDNVADMPQRIAAGARDGDVVLCMGAGSIGGVPAKVVDLLQKNELLAQEGRAQ</sequence>
<comment type="function">
    <text evidence="1">Cell wall formation.</text>
</comment>
<comment type="catalytic activity">
    <reaction evidence="1">
        <text>UDP-N-acetyl-alpha-D-muramate + L-alanine + ATP = UDP-N-acetyl-alpha-D-muramoyl-L-alanine + ADP + phosphate + H(+)</text>
        <dbReference type="Rhea" id="RHEA:23372"/>
        <dbReference type="ChEBI" id="CHEBI:15378"/>
        <dbReference type="ChEBI" id="CHEBI:30616"/>
        <dbReference type="ChEBI" id="CHEBI:43474"/>
        <dbReference type="ChEBI" id="CHEBI:57972"/>
        <dbReference type="ChEBI" id="CHEBI:70757"/>
        <dbReference type="ChEBI" id="CHEBI:83898"/>
        <dbReference type="ChEBI" id="CHEBI:456216"/>
        <dbReference type="EC" id="6.3.2.8"/>
    </reaction>
</comment>
<comment type="pathway">
    <text evidence="1">Cell wall biogenesis; peptidoglycan biosynthesis.</text>
</comment>
<comment type="subcellular location">
    <subcellularLocation>
        <location evidence="1">Cytoplasm</location>
    </subcellularLocation>
</comment>
<comment type="similarity">
    <text evidence="1">Belongs to the MurCDEF family.</text>
</comment>